<dbReference type="EMBL" id="AY653733">
    <property type="protein sequence ID" value="AAV50342.1"/>
    <property type="molecule type" value="Genomic_DNA"/>
</dbReference>
<dbReference type="SMR" id="Q5UPD8"/>
<dbReference type="KEGG" id="vg:9924660"/>
<dbReference type="OrthoDB" id="31033at10239"/>
<dbReference type="Proteomes" id="UP000001134">
    <property type="component" value="Genome"/>
</dbReference>
<dbReference type="CDD" id="cd18186">
    <property type="entry name" value="BTB_POZ_ZBTB_KLHL-like"/>
    <property type="match status" value="1"/>
</dbReference>
<dbReference type="Gene3D" id="3.30.710.10">
    <property type="entry name" value="Potassium Channel Kv1.1, Chain A"/>
    <property type="match status" value="1"/>
</dbReference>
<dbReference type="InterPro" id="IPR000210">
    <property type="entry name" value="BTB/POZ_dom"/>
</dbReference>
<dbReference type="InterPro" id="IPR011333">
    <property type="entry name" value="SKP1/BTB/POZ_sf"/>
</dbReference>
<dbReference type="Pfam" id="PF00651">
    <property type="entry name" value="BTB"/>
    <property type="match status" value="1"/>
</dbReference>
<dbReference type="SUPFAM" id="SSF75011">
    <property type="entry name" value="3-carboxy-cis,cis-mucoante lactonizing enzyme"/>
    <property type="match status" value="1"/>
</dbReference>
<dbReference type="SUPFAM" id="SSF54695">
    <property type="entry name" value="POZ domain"/>
    <property type="match status" value="1"/>
</dbReference>
<dbReference type="PROSITE" id="PS50097">
    <property type="entry name" value="BTB"/>
    <property type="match status" value="1"/>
</dbReference>
<accession>Q5UPD8</accession>
<protein>
    <recommendedName>
        <fullName>Putative BTB/POZ domain-containing protein L67</fullName>
    </recommendedName>
</protein>
<reference key="1">
    <citation type="journal article" date="2004" name="Science">
        <title>The 1.2-megabase genome sequence of Mimivirus.</title>
        <authorList>
            <person name="Raoult D."/>
            <person name="Audic S."/>
            <person name="Robert C."/>
            <person name="Abergel C."/>
            <person name="Renesto P."/>
            <person name="Ogata H."/>
            <person name="La Scola B."/>
            <person name="Susan M."/>
            <person name="Claverie J.-M."/>
        </authorList>
    </citation>
    <scope>NUCLEOTIDE SEQUENCE [LARGE SCALE GENOMIC DNA]</scope>
    <source>
        <strain>Rowbotham-Bradford</strain>
    </source>
</reference>
<sequence length="498" mass="58845">MNNYNNFFVKFNNQNFSDFYNSDTLSDINITLSDNLKTVSLKLHRIVLFANCEFFKGMFSGFNESIQKENIIKVPNIDICCDIIKQMYGISLSEINRDWKYMLRYYKCCDYFMLESNFPENINVSRCEFDELLDLVDEIGYNEKTIKLLAQNMPINYNITNLPSDLLSELLNYTNVNSFIFVKDFSIYLVNNDDIPKHLTNTESTVICYVPNLNRLFFKANNRLNFMDLDTEYIQQINLNNVGIINSMLCDHNTNNLIINYKSRGESIESRIEIFDTDKLKITKTIYKTNKYNINNLCLSKDFSKLAFTLSKTTLNPYTYKEIIHIYNFLTEELCEFPDEFNSKIHCLKFMNNDKDFIYYLKKDYHYQVFTCINNTHHNIFRTENIEYLEIYLDKYILLNTGYSMTIISLDKSCMGKIRDFVGEYIITPNNHVICYGYHTKSLDISQIINNLAENKEIQITSFGSPYYGIKNIFFVNDKNCLKRRIEDYLKSILKTTN</sequence>
<name>YL067_MIMIV</name>
<organismHost>
    <name type="scientific">Acanthamoeba polyphaga</name>
    <name type="common">Amoeba</name>
    <dbReference type="NCBI Taxonomy" id="5757"/>
</organismHost>
<keyword id="KW-1185">Reference proteome</keyword>
<gene>
    <name type="ordered locus">MIMI_L67</name>
</gene>
<evidence type="ECO:0000255" key="1">
    <source>
        <dbReference type="PROSITE-ProRule" id="PRU00037"/>
    </source>
</evidence>
<evidence type="ECO:0000305" key="2"/>
<proteinExistence type="inferred from homology"/>
<comment type="similarity">
    <text evidence="2">Belongs to the mimivirus BTB/WD family.</text>
</comment>
<organism>
    <name type="scientific">Acanthamoeba polyphaga mimivirus</name>
    <name type="common">APMV</name>
    <dbReference type="NCBI Taxonomy" id="212035"/>
    <lineage>
        <taxon>Viruses</taxon>
        <taxon>Varidnaviria</taxon>
        <taxon>Bamfordvirae</taxon>
        <taxon>Nucleocytoviricota</taxon>
        <taxon>Megaviricetes</taxon>
        <taxon>Imitervirales</taxon>
        <taxon>Mimiviridae</taxon>
        <taxon>Megamimivirinae</taxon>
        <taxon>Mimivirus</taxon>
        <taxon>Mimivirus bradfordmassiliense</taxon>
    </lineage>
</organism>
<feature type="chain" id="PRO_0000186224" description="Putative BTB/POZ domain-containing protein L67">
    <location>
        <begin position="1"/>
        <end position="498"/>
    </location>
</feature>
<feature type="domain" description="BTB" evidence="1">
    <location>
        <begin position="26"/>
        <end position="96"/>
    </location>
</feature>